<feature type="chain" id="PRO_0000076808" description="3-isopropylmalate dehydratase large subunit">
    <location>
        <begin position="1"/>
        <end position="466"/>
    </location>
</feature>
<feature type="binding site" evidence="1">
    <location>
        <position position="347"/>
    </location>
    <ligand>
        <name>[4Fe-4S] cluster</name>
        <dbReference type="ChEBI" id="CHEBI:49883"/>
    </ligand>
</feature>
<feature type="binding site" evidence="1">
    <location>
        <position position="407"/>
    </location>
    <ligand>
        <name>[4Fe-4S] cluster</name>
        <dbReference type="ChEBI" id="CHEBI:49883"/>
    </ligand>
</feature>
<feature type="binding site" evidence="1">
    <location>
        <position position="410"/>
    </location>
    <ligand>
        <name>[4Fe-4S] cluster</name>
        <dbReference type="ChEBI" id="CHEBI:49883"/>
    </ligand>
</feature>
<accession>Q821C2</accession>
<evidence type="ECO:0000255" key="1">
    <source>
        <dbReference type="HAMAP-Rule" id="MF_01026"/>
    </source>
</evidence>
<name>LEUC_SHIFL</name>
<comment type="function">
    <text evidence="1">Catalyzes the isomerization between 2-isopropylmalate and 3-isopropylmalate, via the formation of 2-isopropylmaleate.</text>
</comment>
<comment type="catalytic activity">
    <reaction evidence="1">
        <text>(2R,3S)-3-isopropylmalate = (2S)-2-isopropylmalate</text>
        <dbReference type="Rhea" id="RHEA:32287"/>
        <dbReference type="ChEBI" id="CHEBI:1178"/>
        <dbReference type="ChEBI" id="CHEBI:35121"/>
        <dbReference type="EC" id="4.2.1.33"/>
    </reaction>
</comment>
<comment type="cofactor">
    <cofactor evidence="1">
        <name>[4Fe-4S] cluster</name>
        <dbReference type="ChEBI" id="CHEBI:49883"/>
    </cofactor>
    <text evidence="1">Binds 1 [4Fe-4S] cluster per subunit.</text>
</comment>
<comment type="pathway">
    <text evidence="1">Amino-acid biosynthesis; L-leucine biosynthesis; L-leucine from 3-methyl-2-oxobutanoate: step 2/4.</text>
</comment>
<comment type="subunit">
    <text evidence="1">Heterodimer of LeuC and LeuD.</text>
</comment>
<comment type="similarity">
    <text evidence="1">Belongs to the aconitase/IPM isomerase family. LeuC type 1 subfamily.</text>
</comment>
<organism>
    <name type="scientific">Shigella flexneri</name>
    <dbReference type="NCBI Taxonomy" id="623"/>
    <lineage>
        <taxon>Bacteria</taxon>
        <taxon>Pseudomonadati</taxon>
        <taxon>Pseudomonadota</taxon>
        <taxon>Gammaproteobacteria</taxon>
        <taxon>Enterobacterales</taxon>
        <taxon>Enterobacteriaceae</taxon>
        <taxon>Shigella</taxon>
    </lineage>
</organism>
<gene>
    <name evidence="1" type="primary">leuC</name>
    <name type="ordered locus">SF0067</name>
    <name type="ordered locus">S0069</name>
</gene>
<keyword id="KW-0004">4Fe-4S</keyword>
<keyword id="KW-0028">Amino-acid biosynthesis</keyword>
<keyword id="KW-0100">Branched-chain amino acid biosynthesis</keyword>
<keyword id="KW-0408">Iron</keyword>
<keyword id="KW-0411">Iron-sulfur</keyword>
<keyword id="KW-0432">Leucine biosynthesis</keyword>
<keyword id="KW-0456">Lyase</keyword>
<keyword id="KW-0479">Metal-binding</keyword>
<keyword id="KW-1185">Reference proteome</keyword>
<dbReference type="EC" id="4.2.1.33" evidence="1"/>
<dbReference type="EMBL" id="AE005674">
    <property type="protein sequence ID" value="AAN41732.1"/>
    <property type="molecule type" value="Genomic_DNA"/>
</dbReference>
<dbReference type="EMBL" id="AE014073">
    <property type="protein sequence ID" value="AAP15613.1"/>
    <property type="molecule type" value="Genomic_DNA"/>
</dbReference>
<dbReference type="RefSeq" id="NP_706025.1">
    <property type="nucleotide sequence ID" value="NC_004337.2"/>
</dbReference>
<dbReference type="RefSeq" id="WP_001140640.1">
    <property type="nucleotide sequence ID" value="NZ_WPGW01000005.1"/>
</dbReference>
<dbReference type="SMR" id="Q821C2"/>
<dbReference type="STRING" id="198214.SF0067"/>
<dbReference type="PaxDb" id="198214-SF0067"/>
<dbReference type="GeneID" id="1024527"/>
<dbReference type="KEGG" id="sfl:SF0067"/>
<dbReference type="KEGG" id="sfx:S0069"/>
<dbReference type="PATRIC" id="fig|198214.7.peg.79"/>
<dbReference type="HOGENOM" id="CLU_006714_3_4_6"/>
<dbReference type="UniPathway" id="UPA00048">
    <property type="reaction ID" value="UER00071"/>
</dbReference>
<dbReference type="Proteomes" id="UP000001006">
    <property type="component" value="Chromosome"/>
</dbReference>
<dbReference type="Proteomes" id="UP000002673">
    <property type="component" value="Chromosome"/>
</dbReference>
<dbReference type="GO" id="GO:0003861">
    <property type="term" value="F:3-isopropylmalate dehydratase activity"/>
    <property type="evidence" value="ECO:0007669"/>
    <property type="project" value="UniProtKB-UniRule"/>
</dbReference>
<dbReference type="GO" id="GO:0051539">
    <property type="term" value="F:4 iron, 4 sulfur cluster binding"/>
    <property type="evidence" value="ECO:0007669"/>
    <property type="project" value="UniProtKB-KW"/>
</dbReference>
<dbReference type="GO" id="GO:0046872">
    <property type="term" value="F:metal ion binding"/>
    <property type="evidence" value="ECO:0007669"/>
    <property type="project" value="UniProtKB-KW"/>
</dbReference>
<dbReference type="GO" id="GO:0009098">
    <property type="term" value="P:L-leucine biosynthetic process"/>
    <property type="evidence" value="ECO:0007669"/>
    <property type="project" value="UniProtKB-UniRule"/>
</dbReference>
<dbReference type="CDD" id="cd01583">
    <property type="entry name" value="IPMI"/>
    <property type="match status" value="1"/>
</dbReference>
<dbReference type="FunFam" id="3.30.499.10:FF:000006">
    <property type="entry name" value="3-isopropylmalate dehydratase large subunit"/>
    <property type="match status" value="1"/>
</dbReference>
<dbReference type="FunFam" id="3.30.499.10:FF:000007">
    <property type="entry name" value="3-isopropylmalate dehydratase large subunit"/>
    <property type="match status" value="1"/>
</dbReference>
<dbReference type="Gene3D" id="3.30.499.10">
    <property type="entry name" value="Aconitase, domain 3"/>
    <property type="match status" value="2"/>
</dbReference>
<dbReference type="HAMAP" id="MF_01026">
    <property type="entry name" value="LeuC_type1"/>
    <property type="match status" value="1"/>
</dbReference>
<dbReference type="InterPro" id="IPR004430">
    <property type="entry name" value="3-IsopropMal_deHydase_lsu"/>
</dbReference>
<dbReference type="InterPro" id="IPR015931">
    <property type="entry name" value="Acnase/IPM_dHydase_lsu_aba_1/3"/>
</dbReference>
<dbReference type="InterPro" id="IPR001030">
    <property type="entry name" value="Acoase/IPM_deHydtase_lsu_aba"/>
</dbReference>
<dbReference type="InterPro" id="IPR018136">
    <property type="entry name" value="Aconitase_4Fe-4S_BS"/>
</dbReference>
<dbReference type="InterPro" id="IPR036008">
    <property type="entry name" value="Aconitase_4Fe-4S_dom"/>
</dbReference>
<dbReference type="InterPro" id="IPR050067">
    <property type="entry name" value="IPM_dehydratase_rel_enz"/>
</dbReference>
<dbReference type="InterPro" id="IPR033941">
    <property type="entry name" value="IPMI_cat"/>
</dbReference>
<dbReference type="NCBIfam" id="TIGR00170">
    <property type="entry name" value="leuC"/>
    <property type="match status" value="1"/>
</dbReference>
<dbReference type="NCBIfam" id="NF004016">
    <property type="entry name" value="PRK05478.1"/>
    <property type="match status" value="1"/>
</dbReference>
<dbReference type="NCBIfam" id="NF009116">
    <property type="entry name" value="PRK12466.1"/>
    <property type="match status" value="1"/>
</dbReference>
<dbReference type="PANTHER" id="PTHR43822:SF9">
    <property type="entry name" value="3-ISOPROPYLMALATE DEHYDRATASE"/>
    <property type="match status" value="1"/>
</dbReference>
<dbReference type="PANTHER" id="PTHR43822">
    <property type="entry name" value="HOMOACONITASE, MITOCHONDRIAL-RELATED"/>
    <property type="match status" value="1"/>
</dbReference>
<dbReference type="Pfam" id="PF00330">
    <property type="entry name" value="Aconitase"/>
    <property type="match status" value="1"/>
</dbReference>
<dbReference type="PRINTS" id="PR00415">
    <property type="entry name" value="ACONITASE"/>
</dbReference>
<dbReference type="SUPFAM" id="SSF53732">
    <property type="entry name" value="Aconitase iron-sulfur domain"/>
    <property type="match status" value="1"/>
</dbReference>
<dbReference type="PROSITE" id="PS00450">
    <property type="entry name" value="ACONITASE_1"/>
    <property type="match status" value="1"/>
</dbReference>
<dbReference type="PROSITE" id="PS01244">
    <property type="entry name" value="ACONITASE_2"/>
    <property type="match status" value="1"/>
</dbReference>
<sequence>MAKTLYEKLFDAHVVYEAENETPLLYIDRHLVHEVTSPQAFDGLRAHGRPVRQPGKTFATMDHNVSTQTKDINACGEMARIQMQELIKNCKEFGVELYDLNHPYQGIVHVMGPEQGVTLPGMTIVCGDSHTATHGAFGALAFGIGTSEVEHVLATQTLKQGRAKTMKIEVQGKAAPGITAKDIVLAIIGKTGSAGGTGHVVEFCGEAIRDLSMEGRMTLCNMAIEMGAKAALVAPDETTFNYVKGRLHAPKGKDFDDAVAYWKTLQTDEGATFDTVVTLQAEEISPQVTWGTNPGQVISVNDNIPDPASFADPVERASAEKALAYMGLKPGIPLTEVAIDKVFIGSCTNSRIEDLRAAAEIAKGRKVAPGVQALVVPGSGPVKAQAEAEGLDKIFIEAGFEWRLPGCSMCLAMNNDRLNPGERCASTSNRNFEGRQGRGGRTHLVSPAMAAAAAVTGHFADIRNIK</sequence>
<protein>
    <recommendedName>
        <fullName evidence="1">3-isopropylmalate dehydratase large subunit</fullName>
        <ecNumber evidence="1">4.2.1.33</ecNumber>
    </recommendedName>
    <alternativeName>
        <fullName evidence="1">Alpha-IPM isomerase</fullName>
        <shortName evidence="1">IPMI</shortName>
    </alternativeName>
    <alternativeName>
        <fullName evidence="1">Isopropylmalate isomerase</fullName>
    </alternativeName>
</protein>
<reference key="1">
    <citation type="journal article" date="2002" name="Nucleic Acids Res.">
        <title>Genome sequence of Shigella flexneri 2a: insights into pathogenicity through comparison with genomes of Escherichia coli K12 and O157.</title>
        <authorList>
            <person name="Jin Q."/>
            <person name="Yuan Z."/>
            <person name="Xu J."/>
            <person name="Wang Y."/>
            <person name="Shen Y."/>
            <person name="Lu W."/>
            <person name="Wang J."/>
            <person name="Liu H."/>
            <person name="Yang J."/>
            <person name="Yang F."/>
            <person name="Zhang X."/>
            <person name="Zhang J."/>
            <person name="Yang G."/>
            <person name="Wu H."/>
            <person name="Qu D."/>
            <person name="Dong J."/>
            <person name="Sun L."/>
            <person name="Xue Y."/>
            <person name="Zhao A."/>
            <person name="Gao Y."/>
            <person name="Zhu J."/>
            <person name="Kan B."/>
            <person name="Ding K."/>
            <person name="Chen S."/>
            <person name="Cheng H."/>
            <person name="Yao Z."/>
            <person name="He B."/>
            <person name="Chen R."/>
            <person name="Ma D."/>
            <person name="Qiang B."/>
            <person name="Wen Y."/>
            <person name="Hou Y."/>
            <person name="Yu J."/>
        </authorList>
    </citation>
    <scope>NUCLEOTIDE SEQUENCE [LARGE SCALE GENOMIC DNA]</scope>
    <source>
        <strain>301 / Serotype 2a</strain>
    </source>
</reference>
<reference key="2">
    <citation type="journal article" date="2003" name="Infect. Immun.">
        <title>Complete genome sequence and comparative genomics of Shigella flexneri serotype 2a strain 2457T.</title>
        <authorList>
            <person name="Wei J."/>
            <person name="Goldberg M.B."/>
            <person name="Burland V."/>
            <person name="Venkatesan M.M."/>
            <person name="Deng W."/>
            <person name="Fournier G."/>
            <person name="Mayhew G.F."/>
            <person name="Plunkett G. III"/>
            <person name="Rose D.J."/>
            <person name="Darling A."/>
            <person name="Mau B."/>
            <person name="Perna N.T."/>
            <person name="Payne S.M."/>
            <person name="Runyen-Janecky L.J."/>
            <person name="Zhou S."/>
            <person name="Schwartz D.C."/>
            <person name="Blattner F.R."/>
        </authorList>
    </citation>
    <scope>NUCLEOTIDE SEQUENCE [LARGE SCALE GENOMIC DNA]</scope>
    <source>
        <strain>ATCC 700930 / 2457T / Serotype 2a</strain>
    </source>
</reference>
<proteinExistence type="inferred from homology"/>